<sequence length="1144" mass="125093">MANRPAASALAGARSPSERQEPREPEVAPPGGDHVFCRKVSGVMVLSSDPPGPAAYRISDSSFVQCGSNCSMIIDGDVARGHLRDLEGATSTGAFVAISNVAAGGDGRTAVVALGGTSGPSATTSVGTQTSGEFLHGNPRTPEPQGPQAVPPPPPPPFPWGHECCARRDARGGAEKDVGAAESWSDGPSSDSETEDSDSSDEDTGSGSETLSRSSSIWAAGATDDDDSDSDSRSDDSVQPDVVVRRRWSDGPAPVAFPKPRRPGDSPGNPGLGAGTGPGSATDPRASADSDSAAHAAAPQADVAPVLDSQPTVGTDPGYPVPLELTPENAEAVARFLGDAVDREPALMLEYFCRCAREESKRVPPRTFGSAPRLTEDDFGLLNYALAEMRRLCLDLPPVPPNAYTPYHLREYATRLVNGFKPLVRRSARLYRILGILVHLRIRTREASFEEWMRSKEVDLDFGLTERLREHEAQLMILAQALNPYDCLIHSTPNTLVERGLQSALKYEEFYLKRFGGHYMESVFQMYTRIAGFLACRATRGMRHIALGRQGSWWEMFKFFFHRLYDHQIVPSTPAMLNLGTRNYYTSSCYLVNPQATTNQATLRAITGNVSAILARNGGIGLCMQAFNDASPGTASIMPALKVLDSLVAAHNKQSTRPTGACVYLEPWHSDVRAVLRMKGVLAGEEAQRCDNIFSALWMPDLFFKRLIRHLDGEKNVTWSLFDRDTSMSLADFHGEEFEKLYEHLEAMGFGETIPIQDLAYAIVRSAATTGSPFIMFKDAVNRHYIYDTQGAAIAGSNLCTEIVHPSSKRSSGVCNLGSVNLARCVSRRTFDFGMLRDAVQACVLMVNIMIDSTLQPTPQCARGHDNLRSMGIGMQGLHTACLKMGLDLESAEFRDLNTHIAEVMLLAAMKTSNALCVRGARPFSHFKRSMYRAGRFHWERFSNASPRYEGEWEMLRQSMMKHGLRNSQFIALMPTAASAQISDVSEGFAPLFTNLFSKVTRDGETLRPNTLLLKELERTFGGKRLLDAMDGLEAKQWSVAQALPCLDPAHPLRRFKTAFDYDQELLIDLCADRAPYVDHSQSMTLYVTEKADGTLPASTLVRLLVHAYKRGLKTGMYYCKVRKATNSGVFAGDDNIVCTSCAL</sequence>
<protein>
    <recommendedName>
        <fullName evidence="3">Ribonucleoside-diphosphate reductase large subunit</fullName>
        <shortName evidence="3">R1</shortName>
        <ecNumber evidence="3">1.17.4.1</ecNumber>
    </recommendedName>
    <alternativeName>
        <fullName evidence="3">Ribonucleotide reductase large subunit</fullName>
    </alternativeName>
</protein>
<comment type="function">
    <text evidence="1 2 3">Ribonucleoside-diphosphate reductase holoenzyme that provides the precursors necessary for viral DNA synthesis. Allows virus growth in non-dividing cells, as well as reactivation from latency in infected hosts. Catalyzes the biosynthesis of deoxyribonucleotides from the corresponding ribonucleotides (By similarity). The N-terminal region confers antiapoptotic activity in differentiated cells such as neurons and is important for viral reactivation to increase neural survivability. Prevents host necroptosis by targeting host RIPK1 and RIPK3, thereby hampering the formation of necroptotic RIPK1-RIPK3 complexes (By similarity). May form hetero-amyloid structures with host proteins RIPK3 or ZBP1, thereby preventing RIPK3- and ZBP1-mediated necroptosis (By similarity). In addition, inhibits extrinsic apoptosis by targeting host CASP8 (By similarity).</text>
</comment>
<comment type="catalytic activity">
    <reaction evidence="3">
        <text>a 2'-deoxyribonucleoside 5'-diphosphate + [thioredoxin]-disulfide + H2O = a ribonucleoside 5'-diphosphate + [thioredoxin]-dithiol</text>
        <dbReference type="Rhea" id="RHEA:23252"/>
        <dbReference type="Rhea" id="RHEA-COMP:10698"/>
        <dbReference type="Rhea" id="RHEA-COMP:10700"/>
        <dbReference type="ChEBI" id="CHEBI:15377"/>
        <dbReference type="ChEBI" id="CHEBI:29950"/>
        <dbReference type="ChEBI" id="CHEBI:50058"/>
        <dbReference type="ChEBI" id="CHEBI:57930"/>
        <dbReference type="ChEBI" id="CHEBI:73316"/>
        <dbReference type="EC" id="1.17.4.1"/>
    </reaction>
</comment>
<comment type="subunit">
    <text evidence="1 2 3">Heterotetramer composed of a homodimer of the large subunit (R1) and a homodimer of the small subunit (R2). Larger multisubunit protein complex are also active, composed of (R1)n(R2)n (By similarity). May self-assemble (via RIP homotypic interaction motif/RHIM) into homomeric fibrillar amyloid structures (By similarity). Interacts (via RHIM) with human RIPK1 (via RHIM). Interacts (via RHIM) with human RIPK3 (via RHIM) (By similarity). May interact (via RHIM) with human ZBP1 (via RHIM) (By similarity). Interacts (via C-terminus) with host CASP8 (By similarity).</text>
</comment>
<comment type="domain">
    <text evidence="1">The RIP homotypic interaction motif/RHIM may drive self-assembly into homomeric amyloid structures and mediates interaction with the RHIM motif of host proteins RIPK3 and ZBP1 to form heteromeric amyloid structures.</text>
</comment>
<comment type="similarity">
    <text evidence="3">Belongs to the ribonucleoside diphosphate reductase large chain family.</text>
</comment>
<accession>P09853</accession>
<organismHost>
    <name type="scientific">Homo sapiens</name>
    <name type="common">Human</name>
    <dbReference type="NCBI Taxonomy" id="9606"/>
</organismHost>
<feature type="chain" id="PRO_0000187237" description="Ribonucleoside-diphosphate reductase large subunit">
    <location>
        <begin position="1"/>
        <end position="1144"/>
    </location>
</feature>
<feature type="region of interest" description="Disordered" evidence="4">
    <location>
        <begin position="1"/>
        <end position="33"/>
    </location>
</feature>
<feature type="region of interest" description="Disordered" evidence="4">
    <location>
        <begin position="118"/>
        <end position="324"/>
    </location>
</feature>
<feature type="short sequence motif" description="RIP homotypic interaction motif (RHIM)" evidence="1">
    <location>
        <begin position="55"/>
        <end position="75"/>
    </location>
</feature>
<feature type="compositionally biased region" description="Basic and acidic residues" evidence="4">
    <location>
        <begin position="16"/>
        <end position="26"/>
    </location>
</feature>
<feature type="compositionally biased region" description="Polar residues" evidence="4">
    <location>
        <begin position="119"/>
        <end position="132"/>
    </location>
</feature>
<feature type="compositionally biased region" description="Pro residues" evidence="4">
    <location>
        <begin position="141"/>
        <end position="159"/>
    </location>
</feature>
<feature type="compositionally biased region" description="Basic and acidic residues" evidence="4">
    <location>
        <begin position="164"/>
        <end position="179"/>
    </location>
</feature>
<feature type="compositionally biased region" description="Acidic residues" evidence="4">
    <location>
        <begin position="192"/>
        <end position="204"/>
    </location>
</feature>
<feature type="compositionally biased region" description="Low complexity" evidence="4">
    <location>
        <begin position="205"/>
        <end position="216"/>
    </location>
</feature>
<feature type="compositionally biased region" description="Low complexity" evidence="4">
    <location>
        <begin position="279"/>
        <end position="305"/>
    </location>
</feature>
<feature type="active site" description="Proton acceptor" evidence="3">
    <location>
        <position position="798"/>
    </location>
</feature>
<feature type="active site" description="Cysteine radical intermediate" evidence="3">
    <location>
        <position position="800"/>
    </location>
</feature>
<feature type="active site" description="Proton acceptor" evidence="3">
    <location>
        <position position="802"/>
    </location>
</feature>
<feature type="binding site" evidence="3">
    <location>
        <position position="573"/>
    </location>
    <ligand>
        <name>substrate</name>
    </ligand>
</feature>
<feature type="binding site" evidence="3">
    <location>
        <begin position="588"/>
        <end position="589"/>
    </location>
    <ligand>
        <name>substrate</name>
    </ligand>
</feature>
<feature type="binding site" evidence="3">
    <location>
        <position position="619"/>
    </location>
    <ligand>
        <name>substrate</name>
    </ligand>
</feature>
<feature type="binding site" evidence="3">
    <location>
        <begin position="798"/>
        <end position="802"/>
    </location>
    <ligand>
        <name>substrate</name>
    </ligand>
</feature>
<feature type="binding site" evidence="3">
    <location>
        <begin position="975"/>
        <end position="979"/>
    </location>
    <ligand>
        <name>substrate</name>
    </ligand>
</feature>
<feature type="site" description="Important for hydrogen atom transfer" evidence="3">
    <location>
        <position position="589"/>
    </location>
</feature>
<feature type="site" description="Important for hydrogen atom transfer" evidence="3">
    <location>
        <position position="815"/>
    </location>
</feature>
<feature type="site" description="Important for electron transfer" evidence="3">
    <location>
        <position position="1118"/>
    </location>
</feature>
<feature type="site" description="Important for electron transfer" evidence="3">
    <location>
        <position position="1119"/>
    </location>
</feature>
<feature type="site" description="Interacts with thioredoxin/glutaredoxin" evidence="3">
    <location>
        <position position="1139"/>
    </location>
</feature>
<feature type="site" description="Interacts with thioredoxin/glutaredoxin" evidence="3">
    <location>
        <position position="1142"/>
    </location>
</feature>
<feature type="disulfide bond" description="Redox-active" evidence="3">
    <location>
        <begin position="589"/>
        <end position="815"/>
    </location>
</feature>
<reference key="1">
    <citation type="journal article" date="1986" name="J. Virol.">
        <title>Herpes simplex virus specifies two subunits of ribonucleotide reductase encoded by 3'-coterminal transcripts.</title>
        <authorList>
            <person name="Swain M.A."/>
            <person name="Galloway D.A."/>
        </authorList>
    </citation>
    <scope>NUCLEOTIDE SEQUENCE [GENOMIC DNA]</scope>
</reference>
<reference key="2">
    <citation type="journal article" date="1984" name="J. Virol.">
        <title>Organization of the left-hand end of the herpes simplex virus type 2 BglII N fragment.</title>
        <authorList>
            <person name="Galloway D.A."/>
            <person name="Swain M.A."/>
        </authorList>
    </citation>
    <scope>NUCLEOTIDE SEQUENCE [GENOMIC DNA] OF 981-1144</scope>
</reference>
<reference key="3">
    <citation type="journal article" date="1983" name="EMBO J.">
        <title>DNA sequence homology between two co-linear loci on the HSV genome which have different transforming abilities.</title>
        <authorList>
            <person name="McLauchlan J."/>
            <person name="Clements J.B."/>
        </authorList>
    </citation>
    <scope>NUCLEOTIDE SEQUENCE [GENOMIC DNA] OF 1036-1144</scope>
</reference>
<reference key="4">
    <citation type="journal article" date="2009" name="Trends Biochem. Sci.">
        <title>Tinkering with a viral ribonucleotide reductase.</title>
        <authorList>
            <person name="Lembo D."/>
            <person name="Brune W."/>
        </authorList>
    </citation>
    <scope>REVIEW</scope>
</reference>
<keyword id="KW-0067">ATP-binding</keyword>
<keyword id="KW-1015">Disulfide bond</keyword>
<keyword id="KW-0235">DNA replication</keyword>
<keyword id="KW-0244">Early protein</keyword>
<keyword id="KW-0945">Host-virus interaction</keyword>
<keyword id="KW-1085">Inhibition of host caspases by virus</keyword>
<keyword id="KW-1119">Modulation of host cell apoptosis by virus</keyword>
<keyword id="KW-0547">Nucleotide-binding</keyword>
<keyword id="KW-0560">Oxidoreductase</keyword>
<keyword id="KW-1251">Viral latency</keyword>
<keyword id="KW-1272">Viral reactivation from latency</keyword>
<name>RIR1_HHV23</name>
<evidence type="ECO:0000250" key="1">
    <source>
        <dbReference type="UniProtKB" id="P08543"/>
    </source>
</evidence>
<evidence type="ECO:0000250" key="2">
    <source>
        <dbReference type="UniProtKB" id="P89462"/>
    </source>
</evidence>
<evidence type="ECO:0000255" key="3">
    <source>
        <dbReference type="HAMAP-Rule" id="MF_04026"/>
    </source>
</evidence>
<evidence type="ECO:0000256" key="4">
    <source>
        <dbReference type="SAM" id="MobiDB-lite"/>
    </source>
</evidence>
<organism>
    <name type="scientific">Human herpesvirus 2 (strain 333)</name>
    <name type="common">HHV-2</name>
    <name type="synonym">Human herpes simplex virus 2</name>
    <dbReference type="NCBI Taxonomy" id="10313"/>
    <lineage>
        <taxon>Viruses</taxon>
        <taxon>Duplodnaviria</taxon>
        <taxon>Heunggongvirae</taxon>
        <taxon>Peploviricota</taxon>
        <taxon>Herviviricetes</taxon>
        <taxon>Herpesvirales</taxon>
        <taxon>Orthoherpesviridae</taxon>
        <taxon>Alphaherpesvirinae</taxon>
        <taxon>Simplexvirus</taxon>
        <taxon>Simplexvirus humanalpha2</taxon>
        <taxon>Human herpesvirus 2</taxon>
    </lineage>
</organism>
<dbReference type="EC" id="1.17.4.1" evidence="3"/>
<dbReference type="EMBL" id="M12700">
    <property type="protein sequence ID" value="AAA45806.1"/>
    <property type="molecule type" value="Genomic_DNA"/>
</dbReference>
<dbReference type="EMBL" id="X00048">
    <property type="protein sequence ID" value="CAA24929.1"/>
    <property type="molecule type" value="Genomic_DNA"/>
</dbReference>
<dbReference type="SMR" id="P09853"/>
<dbReference type="GO" id="GO:0005524">
    <property type="term" value="F:ATP binding"/>
    <property type="evidence" value="ECO:0007669"/>
    <property type="project" value="UniProtKB-UniRule"/>
</dbReference>
<dbReference type="GO" id="GO:0004748">
    <property type="term" value="F:ribonucleoside-diphosphate reductase activity, thioredoxin disulfide as acceptor"/>
    <property type="evidence" value="ECO:0007669"/>
    <property type="project" value="UniProtKB-UniRule"/>
</dbReference>
<dbReference type="GO" id="GO:0009263">
    <property type="term" value="P:deoxyribonucleotide biosynthetic process"/>
    <property type="evidence" value="ECO:0007669"/>
    <property type="project" value="InterPro"/>
</dbReference>
<dbReference type="GO" id="GO:0006260">
    <property type="term" value="P:DNA replication"/>
    <property type="evidence" value="ECO:0007669"/>
    <property type="project" value="UniProtKB-KW"/>
</dbReference>
<dbReference type="GO" id="GO:0019046">
    <property type="term" value="P:release from viral latency"/>
    <property type="evidence" value="ECO:0007669"/>
    <property type="project" value="UniProtKB-KW"/>
</dbReference>
<dbReference type="GO" id="GO:0033668">
    <property type="term" value="P:symbiont-mediated suppression of host apoptosis"/>
    <property type="evidence" value="ECO:0007669"/>
    <property type="project" value="UniProtKB-KW"/>
</dbReference>
<dbReference type="FunFam" id="3.20.70.20:FF:000021">
    <property type="entry name" value="Ribonucleoside-diphosphate reductase large subunit"/>
    <property type="match status" value="1"/>
</dbReference>
<dbReference type="Gene3D" id="3.20.70.20">
    <property type="match status" value="1"/>
</dbReference>
<dbReference type="HAMAP" id="MF_04026">
    <property type="entry name" value="HSV_RIR1"/>
    <property type="match status" value="1"/>
</dbReference>
<dbReference type="InterPro" id="IPR034717">
    <property type="entry name" value="HSV_RIR1"/>
</dbReference>
<dbReference type="InterPro" id="IPR013346">
    <property type="entry name" value="NrdE_NrdA_C"/>
</dbReference>
<dbReference type="InterPro" id="IPR000788">
    <property type="entry name" value="RNR_lg_C"/>
</dbReference>
<dbReference type="InterPro" id="IPR013509">
    <property type="entry name" value="RNR_lsu_N"/>
</dbReference>
<dbReference type="InterPro" id="IPR039718">
    <property type="entry name" value="Rrm1"/>
</dbReference>
<dbReference type="NCBIfam" id="TIGR02506">
    <property type="entry name" value="NrdE_NrdA"/>
    <property type="match status" value="1"/>
</dbReference>
<dbReference type="PANTHER" id="PTHR11573">
    <property type="entry name" value="RIBONUCLEOSIDE-DIPHOSPHATE REDUCTASE LARGE CHAIN"/>
    <property type="match status" value="1"/>
</dbReference>
<dbReference type="PANTHER" id="PTHR11573:SF6">
    <property type="entry name" value="RIBONUCLEOSIDE-DIPHOSPHATE REDUCTASE LARGE SUBUNIT"/>
    <property type="match status" value="1"/>
</dbReference>
<dbReference type="Pfam" id="PF02867">
    <property type="entry name" value="Ribonuc_red_lgC"/>
    <property type="match status" value="1"/>
</dbReference>
<dbReference type="Pfam" id="PF00317">
    <property type="entry name" value="Ribonuc_red_lgN"/>
    <property type="match status" value="1"/>
</dbReference>
<dbReference type="PRINTS" id="PR01183">
    <property type="entry name" value="RIBORDTASEM1"/>
</dbReference>
<dbReference type="SUPFAM" id="SSF51998">
    <property type="entry name" value="PFL-like glycyl radical enzymes"/>
    <property type="match status" value="1"/>
</dbReference>
<dbReference type="PROSITE" id="PS00089">
    <property type="entry name" value="RIBORED_LARGE"/>
    <property type="match status" value="1"/>
</dbReference>
<gene>
    <name evidence="3" type="primary">RIR1</name>
</gene>
<proteinExistence type="inferred from homology"/>